<organism>
    <name type="scientific">Haemophilus influenzae (strain ATCC 51907 / DSM 11121 / KW20 / Rd)</name>
    <dbReference type="NCBI Taxonomy" id="71421"/>
    <lineage>
        <taxon>Bacteria</taxon>
        <taxon>Pseudomonadati</taxon>
        <taxon>Pseudomonadota</taxon>
        <taxon>Gammaproteobacteria</taxon>
        <taxon>Pasteurellales</taxon>
        <taxon>Pasteurellaceae</taxon>
        <taxon>Haemophilus</taxon>
    </lineage>
</organism>
<proteinExistence type="inferred from homology"/>
<accession>P71377</accession>
<dbReference type="EC" id="3.4.24.-" evidence="1"/>
<dbReference type="EMBL" id="L42023">
    <property type="protein sequence ID" value="AAC22979.1"/>
    <property type="molecule type" value="Genomic_DNA"/>
</dbReference>
<dbReference type="RefSeq" id="NP_439486.1">
    <property type="nucleotide sequence ID" value="NC_000907.1"/>
</dbReference>
<dbReference type="SMR" id="P71377"/>
<dbReference type="STRING" id="71421.HI_1335"/>
<dbReference type="MEROPS" id="M41.001"/>
<dbReference type="EnsemblBacteria" id="AAC22979">
    <property type="protein sequence ID" value="AAC22979"/>
    <property type="gene ID" value="HI_1335"/>
</dbReference>
<dbReference type="KEGG" id="hin:HI_1335"/>
<dbReference type="PATRIC" id="fig|71421.8.peg.1387"/>
<dbReference type="eggNOG" id="COG0465">
    <property type="taxonomic scope" value="Bacteria"/>
</dbReference>
<dbReference type="HOGENOM" id="CLU_000688_16_2_6"/>
<dbReference type="OrthoDB" id="9809379at2"/>
<dbReference type="PhylomeDB" id="P71377"/>
<dbReference type="BioCyc" id="HINF71421:G1GJ1-1359-MONOMER"/>
<dbReference type="Proteomes" id="UP000000579">
    <property type="component" value="Chromosome"/>
</dbReference>
<dbReference type="GO" id="GO:0005886">
    <property type="term" value="C:plasma membrane"/>
    <property type="evidence" value="ECO:0000318"/>
    <property type="project" value="GO_Central"/>
</dbReference>
<dbReference type="GO" id="GO:0005524">
    <property type="term" value="F:ATP binding"/>
    <property type="evidence" value="ECO:0007669"/>
    <property type="project" value="UniProtKB-UniRule"/>
</dbReference>
<dbReference type="GO" id="GO:0016887">
    <property type="term" value="F:ATP hydrolysis activity"/>
    <property type="evidence" value="ECO:0007669"/>
    <property type="project" value="UniProtKB-UniRule"/>
</dbReference>
<dbReference type="GO" id="GO:0004176">
    <property type="term" value="F:ATP-dependent peptidase activity"/>
    <property type="evidence" value="ECO:0000318"/>
    <property type="project" value="GO_Central"/>
</dbReference>
<dbReference type="GO" id="GO:0004222">
    <property type="term" value="F:metalloendopeptidase activity"/>
    <property type="evidence" value="ECO:0007669"/>
    <property type="project" value="InterPro"/>
</dbReference>
<dbReference type="GO" id="GO:0008270">
    <property type="term" value="F:zinc ion binding"/>
    <property type="evidence" value="ECO:0007669"/>
    <property type="project" value="UniProtKB-UniRule"/>
</dbReference>
<dbReference type="GO" id="GO:0030163">
    <property type="term" value="P:protein catabolic process"/>
    <property type="evidence" value="ECO:0000318"/>
    <property type="project" value="GO_Central"/>
</dbReference>
<dbReference type="GO" id="GO:0006508">
    <property type="term" value="P:proteolysis"/>
    <property type="evidence" value="ECO:0000318"/>
    <property type="project" value="GO_Central"/>
</dbReference>
<dbReference type="CDD" id="cd19501">
    <property type="entry name" value="RecA-like_FtsH"/>
    <property type="match status" value="1"/>
</dbReference>
<dbReference type="FunFam" id="1.10.8.60:FF:000001">
    <property type="entry name" value="ATP-dependent zinc metalloprotease FtsH"/>
    <property type="match status" value="1"/>
</dbReference>
<dbReference type="FunFam" id="1.20.58.760:FF:000001">
    <property type="entry name" value="ATP-dependent zinc metalloprotease FtsH"/>
    <property type="match status" value="1"/>
</dbReference>
<dbReference type="FunFam" id="3.40.50.300:FF:000001">
    <property type="entry name" value="ATP-dependent zinc metalloprotease FtsH"/>
    <property type="match status" value="1"/>
</dbReference>
<dbReference type="Gene3D" id="1.10.8.60">
    <property type="match status" value="1"/>
</dbReference>
<dbReference type="Gene3D" id="3.30.720.210">
    <property type="match status" value="1"/>
</dbReference>
<dbReference type="Gene3D" id="3.40.50.300">
    <property type="entry name" value="P-loop containing nucleotide triphosphate hydrolases"/>
    <property type="match status" value="1"/>
</dbReference>
<dbReference type="Gene3D" id="1.20.58.760">
    <property type="entry name" value="Peptidase M41"/>
    <property type="match status" value="1"/>
</dbReference>
<dbReference type="HAMAP" id="MF_01458">
    <property type="entry name" value="FtsH"/>
    <property type="match status" value="1"/>
</dbReference>
<dbReference type="InterPro" id="IPR003593">
    <property type="entry name" value="AAA+_ATPase"/>
</dbReference>
<dbReference type="InterPro" id="IPR041569">
    <property type="entry name" value="AAA_lid_3"/>
</dbReference>
<dbReference type="InterPro" id="IPR003959">
    <property type="entry name" value="ATPase_AAA_core"/>
</dbReference>
<dbReference type="InterPro" id="IPR003960">
    <property type="entry name" value="ATPase_AAA_CS"/>
</dbReference>
<dbReference type="InterPro" id="IPR005936">
    <property type="entry name" value="FtsH"/>
</dbReference>
<dbReference type="InterPro" id="IPR027417">
    <property type="entry name" value="P-loop_NTPase"/>
</dbReference>
<dbReference type="InterPro" id="IPR011546">
    <property type="entry name" value="Pept_M41_FtsH_extracell"/>
</dbReference>
<dbReference type="InterPro" id="IPR000642">
    <property type="entry name" value="Peptidase_M41"/>
</dbReference>
<dbReference type="InterPro" id="IPR037219">
    <property type="entry name" value="Peptidase_M41-like"/>
</dbReference>
<dbReference type="NCBIfam" id="TIGR01241">
    <property type="entry name" value="FtsH_fam"/>
    <property type="match status" value="1"/>
</dbReference>
<dbReference type="NCBIfam" id="NF008004">
    <property type="entry name" value="PRK10733.1"/>
    <property type="match status" value="1"/>
</dbReference>
<dbReference type="PANTHER" id="PTHR23076:SF97">
    <property type="entry name" value="ATP-DEPENDENT ZINC METALLOPROTEASE YME1L1"/>
    <property type="match status" value="1"/>
</dbReference>
<dbReference type="PANTHER" id="PTHR23076">
    <property type="entry name" value="METALLOPROTEASE M41 FTSH"/>
    <property type="match status" value="1"/>
</dbReference>
<dbReference type="Pfam" id="PF00004">
    <property type="entry name" value="AAA"/>
    <property type="match status" value="1"/>
</dbReference>
<dbReference type="Pfam" id="PF17862">
    <property type="entry name" value="AAA_lid_3"/>
    <property type="match status" value="1"/>
</dbReference>
<dbReference type="Pfam" id="PF06480">
    <property type="entry name" value="FtsH_ext"/>
    <property type="match status" value="1"/>
</dbReference>
<dbReference type="Pfam" id="PF01434">
    <property type="entry name" value="Peptidase_M41"/>
    <property type="match status" value="1"/>
</dbReference>
<dbReference type="SMART" id="SM00382">
    <property type="entry name" value="AAA"/>
    <property type="match status" value="1"/>
</dbReference>
<dbReference type="SUPFAM" id="SSF140990">
    <property type="entry name" value="FtsH protease domain-like"/>
    <property type="match status" value="1"/>
</dbReference>
<dbReference type="SUPFAM" id="SSF52540">
    <property type="entry name" value="P-loop containing nucleoside triphosphate hydrolases"/>
    <property type="match status" value="1"/>
</dbReference>
<dbReference type="PROSITE" id="PS00674">
    <property type="entry name" value="AAA"/>
    <property type="match status" value="1"/>
</dbReference>
<evidence type="ECO:0000255" key="1">
    <source>
        <dbReference type="HAMAP-Rule" id="MF_01458"/>
    </source>
</evidence>
<evidence type="ECO:0000256" key="2">
    <source>
        <dbReference type="SAM" id="MobiDB-lite"/>
    </source>
</evidence>
<protein>
    <recommendedName>
        <fullName evidence="1">ATP-dependent zinc metalloprotease FtsH</fullName>
        <ecNumber evidence="1">3.4.24.-</ecNumber>
    </recommendedName>
</protein>
<reference key="1">
    <citation type="journal article" date="1995" name="Science">
        <title>Whole-genome random sequencing and assembly of Haemophilus influenzae Rd.</title>
        <authorList>
            <person name="Fleischmann R.D."/>
            <person name="Adams M.D."/>
            <person name="White O."/>
            <person name="Clayton R.A."/>
            <person name="Kirkness E.F."/>
            <person name="Kerlavage A.R."/>
            <person name="Bult C.J."/>
            <person name="Tomb J.-F."/>
            <person name="Dougherty B.A."/>
            <person name="Merrick J.M."/>
            <person name="McKenney K."/>
            <person name="Sutton G.G."/>
            <person name="FitzHugh W."/>
            <person name="Fields C.A."/>
            <person name="Gocayne J.D."/>
            <person name="Scott J.D."/>
            <person name="Shirley R."/>
            <person name="Liu L.-I."/>
            <person name="Glodek A."/>
            <person name="Kelley J.M."/>
            <person name="Weidman J.F."/>
            <person name="Phillips C.A."/>
            <person name="Spriggs T."/>
            <person name="Hedblom E."/>
            <person name="Cotton M.D."/>
            <person name="Utterback T.R."/>
            <person name="Hanna M.C."/>
            <person name="Nguyen D.T."/>
            <person name="Saudek D.M."/>
            <person name="Brandon R.C."/>
            <person name="Fine L.D."/>
            <person name="Fritchman J.L."/>
            <person name="Fuhrmann J.L."/>
            <person name="Geoghagen N.S.M."/>
            <person name="Gnehm C.L."/>
            <person name="McDonald L.A."/>
            <person name="Small K.V."/>
            <person name="Fraser C.M."/>
            <person name="Smith H.O."/>
            <person name="Venter J.C."/>
        </authorList>
    </citation>
    <scope>NUCLEOTIDE SEQUENCE [LARGE SCALE GENOMIC DNA]</scope>
    <source>
        <strain>ATCC 51907 / DSM 11121 / KW20 / Rd</strain>
    </source>
</reference>
<reference key="2">
    <citation type="submission" date="1996-09" db="EMBL/GenBank/DDBJ databases">
        <authorList>
            <person name="White O."/>
            <person name="Clayton R.A."/>
            <person name="Kerlavage A.R."/>
            <person name="Fleischmann R.D."/>
        </authorList>
    </citation>
    <scope>SEQUENCE REVISION</scope>
</reference>
<sequence length="635" mass="70030">MVKNLVLWVVVAVIMMTAYQSFNSSSVENSTDYTTFVYDVSNGQVTAARFDANEITVTKTDGSKYSTVMPPLEDKKLLDDLLSKKVKVEGTPFERRGFLSQILISWFPMLFLVGVWVFFMRQMQGGGGKAMSFGKSRAKMLNQDQIKVTFADVAGCDEAKEEVGEIVDFLRDPNKFQNLGGKIPKGILMVGPPGTGKTLLARAIAGEAKVPFFTISGSDFVEMFVGVGASRVRDMFEQAKKNAPCLIFIDEIDAVGRQRGAGLGGGHDEREQTLNQMLVEMDGFSGNDGVIVIAATNRPDVLDPALTRPGRFDRQVVVGLPDVKGREQILKVHMRKVSVAQDVDAMTLARGTPGYSGADLANLVNEAALFAARVNKRTVTMLEFEKAKDKINMGPERRTMIMTDKQKESTAYHEAGHAIVGYLVPEHDPVHKVTIIPRGRALGVTFFLPEGDQISISQKQLESKLSTLYAGRLAEDLIYGEENISTGASNDIKVATNIARNMVTQWGFSEKLGPILYTEDEGEVFLGRSMAKAKHMSDETAHSIDEEVRAIVNRNYARAREILIDNMDILHAMKDALVKYETIEEEQIKQLMNREPVTPPSGWGEPKTQQAAYANSTTNDTKPESAVENTDDFNV</sequence>
<gene>
    <name evidence="1" type="primary">ftsH</name>
    <name type="ordered locus">HI_1335</name>
</gene>
<feature type="chain" id="PRO_0000084633" description="ATP-dependent zinc metalloprotease FtsH">
    <location>
        <begin position="1"/>
        <end position="635"/>
    </location>
</feature>
<feature type="topological domain" description="Cytoplasmic" evidence="1">
    <location>
        <begin position="1"/>
        <end position="4"/>
    </location>
</feature>
<feature type="transmembrane region" description="Helical" evidence="1">
    <location>
        <begin position="5"/>
        <end position="25"/>
    </location>
</feature>
<feature type="topological domain" description="Periplasmic" evidence="1">
    <location>
        <begin position="26"/>
        <end position="97"/>
    </location>
</feature>
<feature type="transmembrane region" description="Helical" evidence="1">
    <location>
        <begin position="98"/>
        <end position="118"/>
    </location>
</feature>
<feature type="topological domain" description="Cytoplasmic" evidence="1">
    <location>
        <begin position="119"/>
        <end position="635"/>
    </location>
</feature>
<feature type="region of interest" description="Disordered" evidence="2">
    <location>
        <begin position="593"/>
        <end position="635"/>
    </location>
</feature>
<feature type="compositionally biased region" description="Polar residues" evidence="2">
    <location>
        <begin position="607"/>
        <end position="620"/>
    </location>
</feature>
<feature type="active site" evidence="1">
    <location>
        <position position="414"/>
    </location>
</feature>
<feature type="binding site" evidence="1">
    <location>
        <begin position="191"/>
        <end position="198"/>
    </location>
    <ligand>
        <name>ATP</name>
        <dbReference type="ChEBI" id="CHEBI:30616"/>
    </ligand>
</feature>
<feature type="binding site" evidence="1">
    <location>
        <position position="413"/>
    </location>
    <ligand>
        <name>Zn(2+)</name>
        <dbReference type="ChEBI" id="CHEBI:29105"/>
        <note>catalytic</note>
    </ligand>
</feature>
<feature type="binding site" evidence="1">
    <location>
        <position position="417"/>
    </location>
    <ligand>
        <name>Zn(2+)</name>
        <dbReference type="ChEBI" id="CHEBI:29105"/>
        <note>catalytic</note>
    </ligand>
</feature>
<feature type="binding site" evidence="1">
    <location>
        <position position="491"/>
    </location>
    <ligand>
        <name>Zn(2+)</name>
        <dbReference type="ChEBI" id="CHEBI:29105"/>
        <note>catalytic</note>
    </ligand>
</feature>
<comment type="function">
    <text evidence="1">Acts as a processive, ATP-dependent zinc metallopeptidase for both cytoplasmic and membrane proteins. Plays a role in the quality control of integral membrane proteins.</text>
</comment>
<comment type="cofactor">
    <cofactor evidence="1">
        <name>Zn(2+)</name>
        <dbReference type="ChEBI" id="CHEBI:29105"/>
    </cofactor>
    <text evidence="1">Binds 1 zinc ion per subunit.</text>
</comment>
<comment type="subunit">
    <text evidence="1">Homohexamer.</text>
</comment>
<comment type="subcellular location">
    <subcellularLocation>
        <location evidence="1">Cell inner membrane</location>
        <topology evidence="1">Multi-pass membrane protein</topology>
        <orientation evidence="1">Cytoplasmic side</orientation>
    </subcellularLocation>
</comment>
<comment type="similarity">
    <text evidence="1">In the central section; belongs to the AAA ATPase family.</text>
</comment>
<comment type="similarity">
    <text evidence="1">In the C-terminal section; belongs to the peptidase M41 family.</text>
</comment>
<keyword id="KW-0067">ATP-binding</keyword>
<keyword id="KW-0997">Cell inner membrane</keyword>
<keyword id="KW-1003">Cell membrane</keyword>
<keyword id="KW-0378">Hydrolase</keyword>
<keyword id="KW-0472">Membrane</keyword>
<keyword id="KW-0479">Metal-binding</keyword>
<keyword id="KW-0482">Metalloprotease</keyword>
<keyword id="KW-0547">Nucleotide-binding</keyword>
<keyword id="KW-0645">Protease</keyword>
<keyword id="KW-1185">Reference proteome</keyword>
<keyword id="KW-0812">Transmembrane</keyword>
<keyword id="KW-1133">Transmembrane helix</keyword>
<keyword id="KW-0862">Zinc</keyword>
<name>FTSH_HAEIN</name>